<sequence length="198" mass="22069">MMVKLICAIVDIAGAAFPIDIDTNELVGDFKKVIKAENSRTIACDANDLRLFLAKTDGRWLTEFEVQNGVADISVFEELDVVGAPLNMIGLSEETVSSVAITKELVKAKKTPLHVLVVPSEPVQLQRKLWLVTGTVVNALGSKGIRRHLHLMASLHIGFYDPTRRVDNKNVAFWYEAKNLCFHVLFKSSTCFFYVSPF</sequence>
<evidence type="ECO:0000255" key="1"/>
<evidence type="ECO:0000303" key="2">
    <source>
    </source>
</evidence>
<evidence type="ECO:0000305" key="3"/>
<evidence type="ECO:0000305" key="4">
    <source>
    </source>
</evidence>
<accession>A0A3B7TNW2</accession>
<feature type="signal peptide" evidence="1">
    <location>
        <begin position="1"/>
        <end position="15"/>
    </location>
</feature>
<feature type="chain" id="PRO_5017536872" description="Crinkler effector protein BLC01">
    <location>
        <begin position="16"/>
        <end position="198"/>
    </location>
</feature>
<feature type="region of interest" description="LQLFLAK domain" evidence="4">
    <location>
        <begin position="16"/>
        <end position="55"/>
    </location>
</feature>
<feature type="region of interest" description="DWL domain" evidence="4">
    <location>
        <begin position="56"/>
        <end position="113"/>
    </location>
</feature>
<feature type="short sequence motif" description="HVLVXXP motif" evidence="4">
    <location>
        <begin position="114"/>
        <end position="119"/>
    </location>
</feature>
<gene>
    <name evidence="2" type="primary">BLC01</name>
</gene>
<proteinExistence type="evidence at transcript level"/>
<organism>
    <name type="scientific">Bremia lactucae</name>
    <name type="common">Lettuce downy mildew</name>
    <dbReference type="NCBI Taxonomy" id="4779"/>
    <lineage>
        <taxon>Eukaryota</taxon>
        <taxon>Sar</taxon>
        <taxon>Stramenopiles</taxon>
        <taxon>Oomycota</taxon>
        <taxon>Peronosporales</taxon>
        <taxon>Peronosporaceae</taxon>
        <taxon>Bremia</taxon>
    </lineage>
</organism>
<reference key="1">
    <citation type="journal article" date="2019" name="Mol. Plant Pathol.">
        <title>Recognition of lettuce downy mildew effector BLR38 in Lactuca serriola LS102 requires two unlinked loci.</title>
        <authorList>
            <person name="Pelgrom A.J.E."/>
            <person name="Eikelhof J."/>
            <person name="Elberse J."/>
            <person name="Meisrimler C.N."/>
            <person name="Raedts R."/>
            <person name="Klein J."/>
            <person name="Van den Ackerveken G."/>
        </authorList>
    </citation>
    <scope>NUCLEOTIDE SEQUENCE [MRNA]</scope>
    <scope>FUNCTION</scope>
    <source>
        <strain>Race Bl:24</strain>
    </source>
</reference>
<protein>
    <recommendedName>
        <fullName evidence="2">Crinkler effector protein BLC01</fullName>
    </recommendedName>
</protein>
<dbReference type="EMBL" id="MG686573">
    <property type="protein sequence ID" value="AYE92117.1"/>
    <property type="molecule type" value="mRNA"/>
</dbReference>
<dbReference type="VEuPathDB" id="FungiDB:CCR75_001066"/>
<dbReference type="GO" id="GO:0005576">
    <property type="term" value="C:extracellular region"/>
    <property type="evidence" value="ECO:0007669"/>
    <property type="project" value="UniProtKB-SubCell"/>
</dbReference>
<dbReference type="GO" id="GO:0043657">
    <property type="term" value="C:host cell"/>
    <property type="evidence" value="ECO:0007669"/>
    <property type="project" value="UniProtKB-SubCell"/>
</dbReference>
<dbReference type="InterPro" id="IPR045379">
    <property type="entry name" value="Crinkler_N"/>
</dbReference>
<dbReference type="Pfam" id="PF20147">
    <property type="entry name" value="Crinkler"/>
    <property type="match status" value="1"/>
</dbReference>
<comment type="function">
    <text evidence="4">Secreted effector that elicits necrosis in host plants, a characteristic of plant innate immunity.</text>
</comment>
<comment type="subcellular location">
    <subcellularLocation>
        <location evidence="4">Secreted</location>
    </subcellularLocation>
    <subcellularLocation>
        <location evidence="4">Host cell</location>
    </subcellularLocation>
</comment>
<comment type="domain">
    <text evidence="4">The CRN proteins have modular architectures that include a signal peptide, a conserved N-terminus, and highly diverse C-terminal domains. The conserved CRN N-terminus harbors a distinct LXLFLAK motif, which is followed by the conserved DWL domain. A highly conserved HVLVXXP motif marks the end of the CRN N-terminal domains and forms a junction where diverse C-terminal effector domains are fused. The conserved CRN N-terminus mediates the translocation into the plant host cells.</text>
</comment>
<comment type="similarity">
    <text evidence="3">Belongs to the Crinkler effector family.</text>
</comment>
<keyword id="KW-0964">Secreted</keyword>
<keyword id="KW-0732">Signal</keyword>
<keyword id="KW-0843">Virulence</keyword>
<name>BLC01_BRELC</name>